<sequence>MGSQIRAQIEAQLKQRILLIDGGMGTMIQGYKLQEQDYRGERFADWHSDLKGNNDLLVLTQPQLIKEIHHAYLEAGADILETNTFNATTIAMADYDMESLSEEINFAAARLAREAADEWTAQNPAKPRYVAGVLGPTNRTCSISPDVNDPGYRNVSFDELVEAYSESTRALIRGGSDLILIETIFDTLNAKACAFAVDSVFEELGFALPVMISGTITDASGRTLSGQTTEAFYNSLRHVRPISFGLNCALGPDELRPYVEELSRISETFVSTHPNAGLPNAFGEYDLSPEEMAEHVKEWAQSGFLNLIGGCCGTTPEHIRHMAMAVEGVSPRVLPEIPVACRLSGLEPLTIAKDTLFVNVGERTNVTGSARFKRLIKEELYDEALDVAREQVENGAQIIDINMDEGMLDAEACMVRFLNLCASEPEISKVPIMVDSSKWEVIEAGLKCIQGKGIVNSISLKEGKEKFVEQAKLIRRYGAAVIVMAFDEVGQADTRERKLEICTKAYRILVDEVGFPPEDVIFDPNIFAVATGIDEHNNYAVDFIEAVADIKRDLPHAMISGGVSNVSFSFRGNNYVREAIHAVFLYHCFKNGMDMGIVNAGQLEIYDNVPEKLREAVEDVVLNRRDDATERLLEIAEEYRENAVGKQEDASALEWRTWSVEKRLEHALVKGITEFIVEDTEEARLNASKPLEVIEGPLMDGMNVVGDLFGEGKMFLPQVVKSARVMKQAVAHLEPFINASKQAGSSNGKILLATVKGDVHDIGKNIVGVVLQCNNYEIIDLGVMVPCEQILKVAKEQQVDIIGLSGLITPSLDEMVHVAKEMERLGFDLPLLIGGATTSKAHTAVKIEQNYSHPVVYVNNASRAVGVCTSLLSDELRPAFVERLQADYELVRDQHNRKKPRTKPVTLEAARANKVAIDWQSYTPPAPSQPGVHVFDDFDVATLRQYIDWTPFFLTWSLVGKYPTIFEHEEVGEEAKRLFGDANEWLDRIEQEGLLKARGMCGLFPAASVGDDIEVYTDESRTHVAKVLHNLRQQTEKPKGANYCLSDYVAPKESGKKDWIGAFAVTGGVNERELADQFKAQGDDYNAIMIQAVADRLAEAFAEYLHERVRKEIWGYAADENLSNEELIREKYQGIRPAPGYPACPEHTEKGPLWELLNVEETIGMSLTSSYAMWPGASVSGWYFSHPDSRYFAIAQIQQDQVESYAERKGWDLLEAEKWLGPNING</sequence>
<proteinExistence type="inferred from homology"/>
<gene>
    <name type="primary">metH</name>
    <name type="ordered locus">VV1_1423</name>
</gene>
<protein>
    <recommendedName>
        <fullName>Methionine synthase</fullName>
        <ecNumber>2.1.1.13</ecNumber>
    </recommendedName>
    <alternativeName>
        <fullName>5-methyltetrahydrofolate--homocysteine methyltransferase</fullName>
    </alternativeName>
    <alternativeName>
        <fullName>Methionine synthase, vitamin-B12 dependent</fullName>
        <shortName>MS</shortName>
    </alternativeName>
</protein>
<evidence type="ECO:0000250" key="1"/>
<evidence type="ECO:0000250" key="2">
    <source>
        <dbReference type="UniProtKB" id="P13009"/>
    </source>
</evidence>
<evidence type="ECO:0000255" key="3">
    <source>
        <dbReference type="PROSITE-ProRule" id="PRU00333"/>
    </source>
</evidence>
<evidence type="ECO:0000255" key="4">
    <source>
        <dbReference type="PROSITE-ProRule" id="PRU00334"/>
    </source>
</evidence>
<evidence type="ECO:0000255" key="5">
    <source>
        <dbReference type="PROSITE-ProRule" id="PRU00346"/>
    </source>
</evidence>
<evidence type="ECO:0000255" key="6">
    <source>
        <dbReference type="PROSITE-ProRule" id="PRU00666"/>
    </source>
</evidence>
<evidence type="ECO:0000255" key="7">
    <source>
        <dbReference type="PROSITE-ProRule" id="PRU00667"/>
    </source>
</evidence>
<evidence type="ECO:0000305" key="8"/>
<dbReference type="EC" id="2.1.1.13"/>
<dbReference type="EMBL" id="AE016795">
    <property type="protein sequence ID" value="AAO09863.1"/>
    <property type="molecule type" value="Genomic_DNA"/>
</dbReference>
<dbReference type="RefSeq" id="WP_011079382.1">
    <property type="nucleotide sequence ID" value="NC_004459.3"/>
</dbReference>
<dbReference type="SMR" id="Q8DCJ7"/>
<dbReference type="KEGG" id="vvu:VV1_1423"/>
<dbReference type="HOGENOM" id="CLU_004914_2_2_6"/>
<dbReference type="UniPathway" id="UPA00051">
    <property type="reaction ID" value="UER00081"/>
</dbReference>
<dbReference type="Proteomes" id="UP000002275">
    <property type="component" value="Chromosome 1"/>
</dbReference>
<dbReference type="GO" id="GO:0005829">
    <property type="term" value="C:cytosol"/>
    <property type="evidence" value="ECO:0007669"/>
    <property type="project" value="TreeGrafter"/>
</dbReference>
<dbReference type="GO" id="GO:0031419">
    <property type="term" value="F:cobalamin binding"/>
    <property type="evidence" value="ECO:0007669"/>
    <property type="project" value="UniProtKB-KW"/>
</dbReference>
<dbReference type="GO" id="GO:0008705">
    <property type="term" value="F:methionine synthase activity"/>
    <property type="evidence" value="ECO:0007669"/>
    <property type="project" value="UniProtKB-EC"/>
</dbReference>
<dbReference type="GO" id="GO:0008270">
    <property type="term" value="F:zinc ion binding"/>
    <property type="evidence" value="ECO:0007669"/>
    <property type="project" value="InterPro"/>
</dbReference>
<dbReference type="GO" id="GO:0050667">
    <property type="term" value="P:homocysteine metabolic process"/>
    <property type="evidence" value="ECO:0007669"/>
    <property type="project" value="TreeGrafter"/>
</dbReference>
<dbReference type="GO" id="GO:0032259">
    <property type="term" value="P:methylation"/>
    <property type="evidence" value="ECO:0007669"/>
    <property type="project" value="UniProtKB-KW"/>
</dbReference>
<dbReference type="GO" id="GO:0046653">
    <property type="term" value="P:tetrahydrofolate metabolic process"/>
    <property type="evidence" value="ECO:0007669"/>
    <property type="project" value="TreeGrafter"/>
</dbReference>
<dbReference type="CDD" id="cd02069">
    <property type="entry name" value="methionine_synthase_B12_BD"/>
    <property type="match status" value="1"/>
</dbReference>
<dbReference type="CDD" id="cd00740">
    <property type="entry name" value="MeTr"/>
    <property type="match status" value="1"/>
</dbReference>
<dbReference type="FunFam" id="1.10.1240.10:FF:000001">
    <property type="entry name" value="Methionine synthase"/>
    <property type="match status" value="1"/>
</dbReference>
<dbReference type="FunFam" id="3.20.20.20:FF:000002">
    <property type="entry name" value="Methionine synthase"/>
    <property type="match status" value="1"/>
</dbReference>
<dbReference type="FunFam" id="3.20.20.330:FF:000001">
    <property type="entry name" value="Methionine synthase"/>
    <property type="match status" value="1"/>
</dbReference>
<dbReference type="FunFam" id="3.40.50.280:FF:000001">
    <property type="entry name" value="Methionine synthase"/>
    <property type="match status" value="1"/>
</dbReference>
<dbReference type="Gene3D" id="3.40.50.280">
    <property type="entry name" value="Cobalamin-binding domain"/>
    <property type="match status" value="1"/>
</dbReference>
<dbReference type="Gene3D" id="1.10.288.10">
    <property type="entry name" value="Cobalamin-dependent Methionine Synthase, domain 2"/>
    <property type="match status" value="1"/>
</dbReference>
<dbReference type="Gene3D" id="3.20.20.20">
    <property type="entry name" value="Dihydropteroate synthase-like"/>
    <property type="match status" value="1"/>
</dbReference>
<dbReference type="Gene3D" id="3.20.20.330">
    <property type="entry name" value="Homocysteine-binding-like domain"/>
    <property type="match status" value="1"/>
</dbReference>
<dbReference type="Gene3D" id="1.10.1240.10">
    <property type="entry name" value="Methionine synthase domain"/>
    <property type="match status" value="1"/>
</dbReference>
<dbReference type="Gene3D" id="3.10.196.10">
    <property type="entry name" value="Vitamin B12-dependent methionine synthase, activation domain"/>
    <property type="match status" value="1"/>
</dbReference>
<dbReference type="InterPro" id="IPR003759">
    <property type="entry name" value="Cbl-bd_cap"/>
</dbReference>
<dbReference type="InterPro" id="IPR006158">
    <property type="entry name" value="Cobalamin-bd"/>
</dbReference>
<dbReference type="InterPro" id="IPR036724">
    <property type="entry name" value="Cobalamin-bd_sf"/>
</dbReference>
<dbReference type="InterPro" id="IPR011005">
    <property type="entry name" value="Dihydropteroate_synth-like_sf"/>
</dbReference>
<dbReference type="InterPro" id="IPR003726">
    <property type="entry name" value="HCY_dom"/>
</dbReference>
<dbReference type="InterPro" id="IPR036589">
    <property type="entry name" value="HCY_dom_sf"/>
</dbReference>
<dbReference type="InterPro" id="IPR050554">
    <property type="entry name" value="Met_Synthase/Corrinoid"/>
</dbReference>
<dbReference type="InterPro" id="IPR033706">
    <property type="entry name" value="Met_synthase_B12-bd"/>
</dbReference>
<dbReference type="InterPro" id="IPR011822">
    <property type="entry name" value="MetH"/>
</dbReference>
<dbReference type="InterPro" id="IPR036594">
    <property type="entry name" value="Meth_synthase_dom"/>
</dbReference>
<dbReference type="InterPro" id="IPR000489">
    <property type="entry name" value="Pterin-binding_dom"/>
</dbReference>
<dbReference type="InterPro" id="IPR004223">
    <property type="entry name" value="VitB12-dep_Met_synth_activ_dom"/>
</dbReference>
<dbReference type="InterPro" id="IPR037010">
    <property type="entry name" value="VitB12-dep_Met_synth_activ_sf"/>
</dbReference>
<dbReference type="NCBIfam" id="TIGR02082">
    <property type="entry name" value="metH"/>
    <property type="match status" value="1"/>
</dbReference>
<dbReference type="NCBIfam" id="NF007024">
    <property type="entry name" value="PRK09490.1"/>
    <property type="match status" value="1"/>
</dbReference>
<dbReference type="PANTHER" id="PTHR45833">
    <property type="entry name" value="METHIONINE SYNTHASE"/>
    <property type="match status" value="1"/>
</dbReference>
<dbReference type="PANTHER" id="PTHR45833:SF1">
    <property type="entry name" value="METHIONINE SYNTHASE"/>
    <property type="match status" value="1"/>
</dbReference>
<dbReference type="Pfam" id="PF02310">
    <property type="entry name" value="B12-binding"/>
    <property type="match status" value="1"/>
</dbReference>
<dbReference type="Pfam" id="PF02607">
    <property type="entry name" value="B12-binding_2"/>
    <property type="match status" value="1"/>
</dbReference>
<dbReference type="Pfam" id="PF02965">
    <property type="entry name" value="Met_synt_B12"/>
    <property type="match status" value="1"/>
</dbReference>
<dbReference type="Pfam" id="PF00809">
    <property type="entry name" value="Pterin_bind"/>
    <property type="match status" value="1"/>
</dbReference>
<dbReference type="Pfam" id="PF02574">
    <property type="entry name" value="S-methyl_trans"/>
    <property type="match status" value="1"/>
</dbReference>
<dbReference type="PIRSF" id="PIRSF000381">
    <property type="entry name" value="MetH"/>
    <property type="match status" value="1"/>
</dbReference>
<dbReference type="SMART" id="SM01018">
    <property type="entry name" value="B12-binding_2"/>
    <property type="match status" value="1"/>
</dbReference>
<dbReference type="SUPFAM" id="SSF52242">
    <property type="entry name" value="Cobalamin (vitamin B12)-binding domain"/>
    <property type="match status" value="1"/>
</dbReference>
<dbReference type="SUPFAM" id="SSF51717">
    <property type="entry name" value="Dihydropteroate synthetase-like"/>
    <property type="match status" value="1"/>
</dbReference>
<dbReference type="SUPFAM" id="SSF82282">
    <property type="entry name" value="Homocysteine S-methyltransferase"/>
    <property type="match status" value="1"/>
</dbReference>
<dbReference type="SUPFAM" id="SSF56507">
    <property type="entry name" value="Methionine synthase activation domain-like"/>
    <property type="match status" value="1"/>
</dbReference>
<dbReference type="SUPFAM" id="SSF47644">
    <property type="entry name" value="Methionine synthase domain"/>
    <property type="match status" value="1"/>
</dbReference>
<dbReference type="PROSITE" id="PS50974">
    <property type="entry name" value="ADOMET_ACTIVATION"/>
    <property type="match status" value="1"/>
</dbReference>
<dbReference type="PROSITE" id="PS51332">
    <property type="entry name" value="B12_BINDING"/>
    <property type="match status" value="1"/>
</dbReference>
<dbReference type="PROSITE" id="PS51337">
    <property type="entry name" value="B12_BINDING_NTER"/>
    <property type="match status" value="1"/>
</dbReference>
<dbReference type="PROSITE" id="PS50970">
    <property type="entry name" value="HCY"/>
    <property type="match status" value="1"/>
</dbReference>
<dbReference type="PROSITE" id="PS50972">
    <property type="entry name" value="PTERIN_BINDING"/>
    <property type="match status" value="1"/>
</dbReference>
<name>METH_VIBVU</name>
<comment type="function">
    <text evidence="1">Catalyzes the transfer of a methyl group from methyl-cobalamin to homocysteine, yielding enzyme-bound cob(I)alamin and methionine. Subsequently, remethylates the cofactor using methyltetrahydrofolate (By similarity).</text>
</comment>
<comment type="catalytic activity">
    <reaction>
        <text>(6S)-5-methyl-5,6,7,8-tetrahydrofolate + L-homocysteine = (6S)-5,6,7,8-tetrahydrofolate + L-methionine</text>
        <dbReference type="Rhea" id="RHEA:11172"/>
        <dbReference type="ChEBI" id="CHEBI:18608"/>
        <dbReference type="ChEBI" id="CHEBI:57453"/>
        <dbReference type="ChEBI" id="CHEBI:57844"/>
        <dbReference type="ChEBI" id="CHEBI:58199"/>
        <dbReference type="EC" id="2.1.1.13"/>
    </reaction>
</comment>
<comment type="cofactor">
    <cofactor evidence="1">
        <name>methylcob(III)alamin</name>
        <dbReference type="ChEBI" id="CHEBI:28115"/>
    </cofactor>
</comment>
<comment type="cofactor">
    <cofactor evidence="1">
        <name>Zn(2+)</name>
        <dbReference type="ChEBI" id="CHEBI:29105"/>
    </cofactor>
    <text evidence="1">Binds 1 zinc ion per subunit.</text>
</comment>
<comment type="pathway">
    <text>Amino-acid biosynthesis; L-methionine biosynthesis via de novo pathway; L-methionine from L-homocysteine (MetH route): step 1/1.</text>
</comment>
<comment type="domain">
    <text evidence="1">Modular enzyme with four functionally distinct domains. The isolated Hcy-binding domain catalyzes methyl transfer from free methylcobalamin to homocysteine. The Hcy-binding domain in association with the pterin-binding domain catalyzes the methylation of cob(I)alamin by methyltetrahydrofolate and the methylation of homocysteine. The B12-binding domain binds the cofactor. The AdoMet activation domain binds S-adenosyl-L-methionine. Under aerobic conditions cob(I)alamin can be converted to inactive cob(II)alamin. Reductive methylation by S-adenosyl-L-methionine and flavodoxin regenerates methylcobalamin (By similarity).</text>
</comment>
<comment type="miscellaneous">
    <text evidence="1">L-homocysteine is bound via the zinc atom.</text>
</comment>
<comment type="similarity">
    <text evidence="8">Belongs to the vitamin-B12 dependent methionine synthase family.</text>
</comment>
<reference key="1">
    <citation type="submission" date="2002-12" db="EMBL/GenBank/DDBJ databases">
        <title>Complete genome sequence of Vibrio vulnificus CMCP6.</title>
        <authorList>
            <person name="Rhee J.H."/>
            <person name="Kim S.Y."/>
            <person name="Chung S.S."/>
            <person name="Kim J.J."/>
            <person name="Moon Y.H."/>
            <person name="Jeong H."/>
            <person name="Choy H.E."/>
        </authorList>
    </citation>
    <scope>NUCLEOTIDE SEQUENCE [LARGE SCALE GENOMIC DNA]</scope>
    <source>
        <strain>CMCP6</strain>
    </source>
</reference>
<organism>
    <name type="scientific">Vibrio vulnificus (strain CMCP6)</name>
    <dbReference type="NCBI Taxonomy" id="216895"/>
    <lineage>
        <taxon>Bacteria</taxon>
        <taxon>Pseudomonadati</taxon>
        <taxon>Pseudomonadota</taxon>
        <taxon>Gammaproteobacteria</taxon>
        <taxon>Vibrionales</taxon>
        <taxon>Vibrionaceae</taxon>
        <taxon>Vibrio</taxon>
    </lineage>
</organism>
<feature type="chain" id="PRO_0000204542" description="Methionine synthase">
    <location>
        <begin position="1"/>
        <end position="1226"/>
    </location>
</feature>
<feature type="domain" description="Hcy-binding" evidence="3">
    <location>
        <begin position="6"/>
        <end position="326"/>
    </location>
</feature>
<feature type="domain" description="Pterin-binding" evidence="4">
    <location>
        <begin position="357"/>
        <end position="618"/>
    </location>
</feature>
<feature type="domain" description="B12-binding N-terminal" evidence="7">
    <location>
        <begin position="651"/>
        <end position="745"/>
    </location>
</feature>
<feature type="domain" description="B12-binding" evidence="6">
    <location>
        <begin position="747"/>
        <end position="882"/>
    </location>
</feature>
<feature type="domain" description="AdoMet activation" evidence="5">
    <location>
        <begin position="898"/>
        <end position="1226"/>
    </location>
</feature>
<feature type="binding site" evidence="3">
    <location>
        <position position="248"/>
    </location>
    <ligand>
        <name>Zn(2+)</name>
        <dbReference type="ChEBI" id="CHEBI:29105"/>
    </ligand>
</feature>
<feature type="binding site" evidence="3">
    <location>
        <position position="311"/>
    </location>
    <ligand>
        <name>Zn(2+)</name>
        <dbReference type="ChEBI" id="CHEBI:29105"/>
    </ligand>
</feature>
<feature type="binding site" evidence="3">
    <location>
        <position position="312"/>
    </location>
    <ligand>
        <name>Zn(2+)</name>
        <dbReference type="ChEBI" id="CHEBI:29105"/>
    </ligand>
</feature>
<feature type="binding site" evidence="2">
    <location>
        <position position="695"/>
    </location>
    <ligand>
        <name>methylcob(III)alamin</name>
        <dbReference type="ChEBI" id="CHEBI:28115"/>
    </ligand>
</feature>
<feature type="binding site" evidence="2">
    <location>
        <begin position="757"/>
        <end position="761"/>
    </location>
    <ligand>
        <name>methylcob(III)alamin</name>
        <dbReference type="ChEBI" id="CHEBI:28115"/>
    </ligand>
</feature>
<feature type="binding site" description="axial binding residue" evidence="2">
    <location>
        <position position="760"/>
    </location>
    <ligand>
        <name>methylcob(III)alamin</name>
        <dbReference type="ChEBI" id="CHEBI:28115"/>
    </ligand>
    <ligandPart>
        <name>Co</name>
        <dbReference type="ChEBI" id="CHEBI:27638"/>
    </ligandPart>
</feature>
<feature type="binding site" evidence="2">
    <location>
        <position position="805"/>
    </location>
    <ligand>
        <name>methylcob(III)alamin</name>
        <dbReference type="ChEBI" id="CHEBI:28115"/>
    </ligand>
</feature>
<feature type="binding site" evidence="2">
    <location>
        <position position="809"/>
    </location>
    <ligand>
        <name>methylcob(III)alamin</name>
        <dbReference type="ChEBI" id="CHEBI:28115"/>
    </ligand>
</feature>
<feature type="binding site" evidence="2">
    <location>
        <position position="861"/>
    </location>
    <ligand>
        <name>methylcob(III)alamin</name>
        <dbReference type="ChEBI" id="CHEBI:28115"/>
    </ligand>
</feature>
<feature type="binding site" evidence="1">
    <location>
        <position position="948"/>
    </location>
    <ligand>
        <name>S-adenosyl-L-methionine</name>
        <dbReference type="ChEBI" id="CHEBI:59789"/>
    </ligand>
</feature>
<feature type="binding site" evidence="1">
    <location>
        <position position="1136"/>
    </location>
    <ligand>
        <name>S-adenosyl-L-methionine</name>
        <dbReference type="ChEBI" id="CHEBI:59789"/>
    </ligand>
</feature>
<feature type="binding site" evidence="1">
    <location>
        <begin position="1191"/>
        <end position="1192"/>
    </location>
    <ligand>
        <name>S-adenosyl-L-methionine</name>
        <dbReference type="ChEBI" id="CHEBI:59789"/>
    </ligand>
</feature>
<accession>Q8DCJ7</accession>
<keyword id="KW-0028">Amino-acid biosynthesis</keyword>
<keyword id="KW-0846">Cobalamin</keyword>
<keyword id="KW-0170">Cobalt</keyword>
<keyword id="KW-0479">Metal-binding</keyword>
<keyword id="KW-0486">Methionine biosynthesis</keyword>
<keyword id="KW-0489">Methyltransferase</keyword>
<keyword id="KW-0677">Repeat</keyword>
<keyword id="KW-0949">S-adenosyl-L-methionine</keyword>
<keyword id="KW-0808">Transferase</keyword>
<keyword id="KW-0862">Zinc</keyword>